<evidence type="ECO:0000255" key="1">
    <source>
        <dbReference type="HAMAP-Rule" id="MF_00041"/>
    </source>
</evidence>
<keyword id="KW-0030">Aminoacyl-tRNA synthetase</keyword>
<keyword id="KW-0067">ATP-binding</keyword>
<keyword id="KW-0963">Cytoplasm</keyword>
<keyword id="KW-0436">Ligase</keyword>
<keyword id="KW-0479">Metal-binding</keyword>
<keyword id="KW-0547">Nucleotide-binding</keyword>
<keyword id="KW-0648">Protein biosynthesis</keyword>
<keyword id="KW-1185">Reference proteome</keyword>
<keyword id="KW-0862">Zinc</keyword>
<name>SYC_CORK4</name>
<accession>C4LH17</accession>
<sequence>MTLRIFDSASRQLRDFVPLREGRASVYLCGATVQSAPHIGHLRSGVAFDILRNWLTYMGLDVAFIRNVTDIDDKILNKAAEHNRPWWEWAATYEREFQWAYDQLGVTPPSLEPHATGHVPEMIEYMQRIIDAGHGYAVDGNVYLSPMSLPDYGSLSGQKLDEMDQGESAGTGKRDPRDFTLWKAAKPGEPSWDTPWGRGRPGWHLECTTMATKYLGAEFDIHAGGLDLKFPHHENEIAQAHAAGDGFARYWMHNGWVTMAGEKMSKSLGNVLSVPNLLQIVRPVELRYYLGSAHYRSMLEFSEDALREAAAGYRRLEKFVHAASSVAGKNDRTLGRSEVTDAFTDAMNDDIGVPAALAEVHKVVRSSNSRLDAARRGDSDAVESVVSAGEQVRAMLGVLGVDPLDEKWQEIAAESGAEHDALDTLVRAELDIRAKARAEKDWATADAVRDRLAAAGIVVTDTPSGAEWELSEQ</sequence>
<organism>
    <name type="scientific">Corynebacterium kroppenstedtii (strain DSM 44385 / JCM 11950 / CIP 105744 / CCUG 35717)</name>
    <dbReference type="NCBI Taxonomy" id="645127"/>
    <lineage>
        <taxon>Bacteria</taxon>
        <taxon>Bacillati</taxon>
        <taxon>Actinomycetota</taxon>
        <taxon>Actinomycetes</taxon>
        <taxon>Mycobacteriales</taxon>
        <taxon>Corynebacteriaceae</taxon>
        <taxon>Corynebacterium</taxon>
    </lineage>
</organism>
<comment type="catalytic activity">
    <reaction evidence="1">
        <text>tRNA(Cys) + L-cysteine + ATP = L-cysteinyl-tRNA(Cys) + AMP + diphosphate</text>
        <dbReference type="Rhea" id="RHEA:17773"/>
        <dbReference type="Rhea" id="RHEA-COMP:9661"/>
        <dbReference type="Rhea" id="RHEA-COMP:9679"/>
        <dbReference type="ChEBI" id="CHEBI:30616"/>
        <dbReference type="ChEBI" id="CHEBI:33019"/>
        <dbReference type="ChEBI" id="CHEBI:35235"/>
        <dbReference type="ChEBI" id="CHEBI:78442"/>
        <dbReference type="ChEBI" id="CHEBI:78517"/>
        <dbReference type="ChEBI" id="CHEBI:456215"/>
        <dbReference type="EC" id="6.1.1.16"/>
    </reaction>
</comment>
<comment type="cofactor">
    <cofactor evidence="1">
        <name>Zn(2+)</name>
        <dbReference type="ChEBI" id="CHEBI:29105"/>
    </cofactor>
    <text evidence="1">Binds 1 zinc ion per subunit.</text>
</comment>
<comment type="subunit">
    <text evidence="1">Monomer.</text>
</comment>
<comment type="subcellular location">
    <subcellularLocation>
        <location evidence="1">Cytoplasm</location>
    </subcellularLocation>
</comment>
<comment type="similarity">
    <text evidence="1">Belongs to the class-I aminoacyl-tRNA synthetase family.</text>
</comment>
<protein>
    <recommendedName>
        <fullName evidence="1">Cysteine--tRNA ligase</fullName>
        <ecNumber evidence="1">6.1.1.16</ecNumber>
    </recommendedName>
    <alternativeName>
        <fullName evidence="1">Cysteinyl-tRNA synthetase</fullName>
        <shortName evidence="1">CysRS</shortName>
    </alternativeName>
</protein>
<feature type="chain" id="PRO_1000202117" description="Cysteine--tRNA ligase">
    <location>
        <begin position="1"/>
        <end position="473"/>
    </location>
</feature>
<feature type="short sequence motif" description="'HIGH' region">
    <location>
        <begin position="31"/>
        <end position="41"/>
    </location>
</feature>
<feature type="short sequence motif" description="'KMSKS' region">
    <location>
        <begin position="263"/>
        <end position="267"/>
    </location>
</feature>
<feature type="binding site" evidence="1">
    <location>
        <position position="29"/>
    </location>
    <ligand>
        <name>Zn(2+)</name>
        <dbReference type="ChEBI" id="CHEBI:29105"/>
    </ligand>
</feature>
<feature type="binding site" evidence="1">
    <location>
        <position position="207"/>
    </location>
    <ligand>
        <name>Zn(2+)</name>
        <dbReference type="ChEBI" id="CHEBI:29105"/>
    </ligand>
</feature>
<feature type="binding site" evidence="1">
    <location>
        <position position="232"/>
    </location>
    <ligand>
        <name>Zn(2+)</name>
        <dbReference type="ChEBI" id="CHEBI:29105"/>
    </ligand>
</feature>
<feature type="binding site" evidence="1">
    <location>
        <position position="236"/>
    </location>
    <ligand>
        <name>Zn(2+)</name>
        <dbReference type="ChEBI" id="CHEBI:29105"/>
    </ligand>
</feature>
<feature type="binding site" evidence="1">
    <location>
        <position position="266"/>
    </location>
    <ligand>
        <name>ATP</name>
        <dbReference type="ChEBI" id="CHEBI:30616"/>
    </ligand>
</feature>
<dbReference type="EC" id="6.1.1.16" evidence="1"/>
<dbReference type="EMBL" id="CP001620">
    <property type="protein sequence ID" value="ACR17122.1"/>
    <property type="molecule type" value="Genomic_DNA"/>
</dbReference>
<dbReference type="RefSeq" id="WP_012731010.1">
    <property type="nucleotide sequence ID" value="NC_012704.1"/>
</dbReference>
<dbReference type="SMR" id="C4LH17"/>
<dbReference type="STRING" id="645127.ckrop_0343"/>
<dbReference type="KEGG" id="ckp:ckrop_0343"/>
<dbReference type="eggNOG" id="COG0215">
    <property type="taxonomic scope" value="Bacteria"/>
</dbReference>
<dbReference type="HOGENOM" id="CLU_013528_0_1_11"/>
<dbReference type="OrthoDB" id="9815130at2"/>
<dbReference type="Proteomes" id="UP000001473">
    <property type="component" value="Chromosome"/>
</dbReference>
<dbReference type="GO" id="GO:0005829">
    <property type="term" value="C:cytosol"/>
    <property type="evidence" value="ECO:0007669"/>
    <property type="project" value="TreeGrafter"/>
</dbReference>
<dbReference type="GO" id="GO:0005524">
    <property type="term" value="F:ATP binding"/>
    <property type="evidence" value="ECO:0007669"/>
    <property type="project" value="UniProtKB-UniRule"/>
</dbReference>
<dbReference type="GO" id="GO:0004817">
    <property type="term" value="F:cysteine-tRNA ligase activity"/>
    <property type="evidence" value="ECO:0007669"/>
    <property type="project" value="UniProtKB-UniRule"/>
</dbReference>
<dbReference type="GO" id="GO:0008270">
    <property type="term" value="F:zinc ion binding"/>
    <property type="evidence" value="ECO:0007669"/>
    <property type="project" value="UniProtKB-UniRule"/>
</dbReference>
<dbReference type="GO" id="GO:0006423">
    <property type="term" value="P:cysteinyl-tRNA aminoacylation"/>
    <property type="evidence" value="ECO:0007669"/>
    <property type="project" value="UniProtKB-UniRule"/>
</dbReference>
<dbReference type="CDD" id="cd00672">
    <property type="entry name" value="CysRS_core"/>
    <property type="match status" value="1"/>
</dbReference>
<dbReference type="FunFam" id="3.40.50.620:FF:000068">
    <property type="entry name" value="Cysteine--tRNA ligase"/>
    <property type="match status" value="1"/>
</dbReference>
<dbReference type="Gene3D" id="1.20.120.1910">
    <property type="entry name" value="Cysteine-tRNA ligase, C-terminal anti-codon recognition domain"/>
    <property type="match status" value="1"/>
</dbReference>
<dbReference type="Gene3D" id="3.40.50.620">
    <property type="entry name" value="HUPs"/>
    <property type="match status" value="1"/>
</dbReference>
<dbReference type="HAMAP" id="MF_00041">
    <property type="entry name" value="Cys_tRNA_synth"/>
    <property type="match status" value="1"/>
</dbReference>
<dbReference type="InterPro" id="IPR015803">
    <property type="entry name" value="Cys-tRNA-ligase"/>
</dbReference>
<dbReference type="InterPro" id="IPR015273">
    <property type="entry name" value="Cys-tRNA-synt_Ia_DALR"/>
</dbReference>
<dbReference type="InterPro" id="IPR024909">
    <property type="entry name" value="Cys-tRNA/MSH_ligase"/>
</dbReference>
<dbReference type="InterPro" id="IPR056411">
    <property type="entry name" value="CysS_C"/>
</dbReference>
<dbReference type="InterPro" id="IPR014729">
    <property type="entry name" value="Rossmann-like_a/b/a_fold"/>
</dbReference>
<dbReference type="InterPro" id="IPR032678">
    <property type="entry name" value="tRNA-synt_1_cat_dom"/>
</dbReference>
<dbReference type="InterPro" id="IPR009080">
    <property type="entry name" value="tRNAsynth_Ia_anticodon-bd"/>
</dbReference>
<dbReference type="NCBIfam" id="TIGR00435">
    <property type="entry name" value="cysS"/>
    <property type="match status" value="1"/>
</dbReference>
<dbReference type="PANTHER" id="PTHR10890:SF30">
    <property type="entry name" value="CYSTEINE--TRNA LIGASE"/>
    <property type="match status" value="1"/>
</dbReference>
<dbReference type="PANTHER" id="PTHR10890">
    <property type="entry name" value="CYSTEINYL-TRNA SYNTHETASE"/>
    <property type="match status" value="1"/>
</dbReference>
<dbReference type="Pfam" id="PF23493">
    <property type="entry name" value="CysS_C"/>
    <property type="match status" value="1"/>
</dbReference>
<dbReference type="Pfam" id="PF09190">
    <property type="entry name" value="DALR_2"/>
    <property type="match status" value="1"/>
</dbReference>
<dbReference type="Pfam" id="PF01406">
    <property type="entry name" value="tRNA-synt_1e"/>
    <property type="match status" value="1"/>
</dbReference>
<dbReference type="PRINTS" id="PR00983">
    <property type="entry name" value="TRNASYNTHCYS"/>
</dbReference>
<dbReference type="SMART" id="SM00840">
    <property type="entry name" value="DALR_2"/>
    <property type="match status" value="1"/>
</dbReference>
<dbReference type="SUPFAM" id="SSF47323">
    <property type="entry name" value="Anticodon-binding domain of a subclass of class I aminoacyl-tRNA synthetases"/>
    <property type="match status" value="1"/>
</dbReference>
<dbReference type="SUPFAM" id="SSF52374">
    <property type="entry name" value="Nucleotidylyl transferase"/>
    <property type="match status" value="1"/>
</dbReference>
<gene>
    <name evidence="1" type="primary">cysS</name>
    <name type="ordered locus">ckrop_0343</name>
</gene>
<reference key="1">
    <citation type="journal article" date="2008" name="J. Biotechnol.">
        <title>Ultrafast pyrosequencing of Corynebacterium kroppenstedtii DSM44385 revealed insights into the physiology of a lipophilic corynebacterium that lacks mycolic acids.</title>
        <authorList>
            <person name="Tauch A."/>
            <person name="Schneider J."/>
            <person name="Szczepanowski R."/>
            <person name="Tilker A."/>
            <person name="Viehoever P."/>
            <person name="Gartemann K.-H."/>
            <person name="Arnold W."/>
            <person name="Blom J."/>
            <person name="Brinkrolf K."/>
            <person name="Brune I."/>
            <person name="Goetker S."/>
            <person name="Weisshaar B."/>
            <person name="Goesmann A."/>
            <person name="Droege M."/>
            <person name="Puehler A."/>
        </authorList>
    </citation>
    <scope>NUCLEOTIDE SEQUENCE [LARGE SCALE GENOMIC DNA]</scope>
    <source>
        <strain>DSM 44385 / JCM 11950 / CIP 105744 / CCUG 35717</strain>
    </source>
</reference>
<proteinExistence type="inferred from homology"/>